<organism>
    <name type="scientific">Homo sapiens</name>
    <name type="common">Human</name>
    <dbReference type="NCBI Taxonomy" id="9606"/>
    <lineage>
        <taxon>Eukaryota</taxon>
        <taxon>Metazoa</taxon>
        <taxon>Chordata</taxon>
        <taxon>Craniata</taxon>
        <taxon>Vertebrata</taxon>
        <taxon>Euteleostomi</taxon>
        <taxon>Mammalia</taxon>
        <taxon>Eutheria</taxon>
        <taxon>Euarchontoglires</taxon>
        <taxon>Primates</taxon>
        <taxon>Haplorrhini</taxon>
        <taxon>Catarrhini</taxon>
        <taxon>Hominidae</taxon>
        <taxon>Homo</taxon>
    </lineage>
</organism>
<gene>
    <name type="primary">IGSF8</name>
    <name type="synonym">CD81P3</name>
    <name type="synonym">EWI2</name>
    <name type="synonym">KCT4</name>
</gene>
<proteinExistence type="evidence at protein level"/>
<protein>
    <recommendedName>
        <fullName>Immunoglobulin superfamily member 8</fullName>
        <shortName>IgSF8</shortName>
    </recommendedName>
    <alternativeName>
        <fullName>CD81 partner 3</fullName>
    </alternativeName>
    <alternativeName>
        <fullName>Glu-Trp-Ile EWI motif-containing protein 2</fullName>
        <shortName>EWI-2</shortName>
    </alternativeName>
    <alternativeName>
        <fullName>Keratinocytes-associated transmembrane protein 4</fullName>
        <shortName>KCT-4</shortName>
    </alternativeName>
    <alternativeName>
        <fullName>LIR-D1</fullName>
    </alternativeName>
    <alternativeName>
        <fullName>Prostaglandin regulatory-like protein</fullName>
        <shortName>PGRL</shortName>
    </alternativeName>
    <cdAntigenName>CD316</cdAntigenName>
</protein>
<name>IGSF8_HUMAN</name>
<comment type="function">
    <text evidence="5 7 8 9 10 11 14 15 16">Member of the immunoglobulin superfamily (IgSF) that links tetraspanin-enriched microdomains to the actin cytoskeleton and plays several important roles in innate and adaptive immunity (PubMed:11504738, PubMed:14662754). Acts as an inducible receptor of HSPA8 on dendritic cells to enhance the CCL21/SLC-dependent migration of activated mature dendritic cells while attenuating their antigen-specific stimulatory capacities (PubMed:17785435). In complex with alpha-actinins ACTN1 and ACTN4, regulates actin dynamics in the immune synapse and subsequent T-cell activation (PubMed:22689882). Inhibits the entry of several viruses such as hepatitis C Virus (HCV) or HIV-1. Mechanistically, promotes a change in CD81 organization at the plasma membrane by significantly restricting its diffusion which in turn influences CD81 interaction with Claudin-1/CLDN1, preventing CLDN1 from acting as a co-receptor required for HCV entry (PubMed:23351194). Accumulates at the presynaptic terminal, the producer cell side of the virological synapse, to prevent HIV-1 Env-mediated cell-cell fusion (PubMed:31757023). Highly expressed on malignant cells with antigen presentation defects, interacts with NK receptor KIR3DL2 to suppress NK-cell cytotoxicity (PubMed:38657602). May participate in the regulation of neurite outgrowth and maintenance of the neural network in the adult brain.</text>
</comment>
<comment type="subunit">
    <text evidence="5 7 9 10">Interacts directly with CD82, CD81/tetraspanin-28 and CD9/tetraspanin-29. Also interacts with integrin alpha-3/beta-1 and integrin alpha-4/beta-1. Interacts with HSPA8; this interaction modulates migratory and antigen-presenting capacities of dendritic cells (PubMed:17785435).</text>
</comment>
<comment type="interaction">
    <interactant intactId="EBI-8293590">
        <id>Q969P0</id>
    </interactant>
    <interactant intactId="EBI-11959885">
        <id>Q07627</id>
        <label>KRTAP1-1</label>
    </interactant>
    <organismsDiffer>false</organismsDiffer>
    <experiments>3</experiments>
</comment>
<comment type="interaction">
    <interactant intactId="EBI-8293590">
        <id>Q969P0</id>
    </interactant>
    <interactant intactId="EBI-11749135">
        <id>Q8IUG1</id>
        <label>KRTAP1-3</label>
    </interactant>
    <organismsDiffer>false</organismsDiffer>
    <experiments>3</experiments>
</comment>
<comment type="interaction">
    <interactant intactId="EBI-8293590">
        <id>Q969P0</id>
    </interactant>
    <interactant intactId="EBI-10178153">
        <id>P60372</id>
        <label>KRTAP10-4</label>
    </interactant>
    <organismsDiffer>false</organismsDiffer>
    <experiments>3</experiments>
</comment>
<comment type="interaction">
    <interactant intactId="EBI-8293590">
        <id>Q969P0</id>
    </interactant>
    <interactant intactId="EBI-10172290">
        <id>P60409</id>
        <label>KRTAP10-7</label>
    </interactant>
    <organismsDiffer>false</organismsDiffer>
    <experiments>6</experiments>
</comment>
<comment type="interaction">
    <interactant intactId="EBI-8293590">
        <id>Q969P0</id>
    </interactant>
    <interactant intactId="EBI-10171774">
        <id>P60410</id>
        <label>KRTAP10-8</label>
    </interactant>
    <organismsDiffer>false</organismsDiffer>
    <experiments>6</experiments>
</comment>
<comment type="interaction">
    <interactant intactId="EBI-8293590">
        <id>Q969P0</id>
    </interactant>
    <interactant intactId="EBI-10172052">
        <id>P60411</id>
        <label>KRTAP10-9</label>
    </interactant>
    <organismsDiffer>false</organismsDiffer>
    <experiments>3</experiments>
</comment>
<comment type="interaction">
    <interactant intactId="EBI-8293590">
        <id>Q969P0</id>
    </interactant>
    <interactant intactId="EBI-14065470">
        <id>Q9BYR9</id>
        <label>KRTAP2-4</label>
    </interactant>
    <organismsDiffer>false</organismsDiffer>
    <experiments>3</experiments>
</comment>
<comment type="interaction">
    <interactant intactId="EBI-8293590">
        <id>Q969P0</id>
    </interactant>
    <interactant intactId="EBI-11987425">
        <id>Q6L8G8</id>
        <label>KRTAP5-7</label>
    </interactant>
    <organismsDiffer>false</organismsDiffer>
    <experiments>3</experiments>
</comment>
<comment type="interaction">
    <interactant intactId="EBI-8293590">
        <id>Q969P0</id>
    </interactant>
    <interactant intactId="EBI-2562368">
        <id>P22735</id>
        <label>TGM1</label>
    </interactant>
    <organismsDiffer>false</organismsDiffer>
    <experiments>3</experiments>
</comment>
<comment type="subcellular location">
    <subcellularLocation>
        <location evidence="14">Cell membrane</location>
        <topology>Single-pass membrane protein</topology>
    </subcellularLocation>
    <text evidence="14">Colocalizes with CD81 at the immune synapse.</text>
</comment>
<comment type="alternative products">
    <event type="alternative splicing"/>
    <isoform>
        <id>Q969P0-1</id>
        <name>1</name>
        <sequence type="displayed"/>
    </isoform>
    <isoform>
        <id>Q969P0-2</id>
        <name>2</name>
        <sequence type="described" ref="VSP_017429 VSP_017430"/>
    </isoform>
    <isoform>
        <id>Q969P0-3</id>
        <name>3</name>
        <sequence type="described" ref="VSP_017431"/>
    </isoform>
</comment>
<comment type="tissue specificity">
    <text evidence="5 6 7 11">Expressed in brain, kidney, testis, liver and placenta with moderate expression in all other tissues. Detected on a majority of B-cells, T-cells, and natural killer cells (PubMed:12708969). Expressed on dendritic cells (PubMed:17785435).</text>
</comment>
<comment type="domain">
    <text evidence="1">The Ig-like C2-type domains 3 and 4 are required for interaction with CD81.</text>
</comment>
<comment type="domain">
    <text evidence="1">The short cytoplasmic domain is very basic, interacts with membrane PIPs, and mediates plasma membrane localization.</text>
</comment>
<comment type="online information" name="Atlas of Genetics and Cytogenetics in Oncology and Haematology">
    <link uri="https://atlasgeneticsoncology.org/gene/45820/IGSF8"/>
</comment>
<feature type="signal peptide" evidence="13">
    <location>
        <begin position="1"/>
        <end position="27"/>
    </location>
</feature>
<feature type="chain" id="PRO_0000226247" description="Immunoglobulin superfamily member 8">
    <location>
        <begin position="28"/>
        <end position="613"/>
    </location>
</feature>
<feature type="topological domain" description="Extracellular" evidence="2">
    <location>
        <begin position="28"/>
        <end position="579"/>
    </location>
</feature>
<feature type="transmembrane region" description="Helical" evidence="2">
    <location>
        <begin position="580"/>
        <end position="600"/>
    </location>
</feature>
<feature type="topological domain" description="Cytoplasmic" evidence="2">
    <location>
        <begin position="601"/>
        <end position="613"/>
    </location>
</feature>
<feature type="domain" description="Ig-like C2-type 1">
    <location>
        <begin position="28"/>
        <end position="149"/>
    </location>
</feature>
<feature type="domain" description="Ig-like C2-type 2">
    <location>
        <begin position="162"/>
        <end position="286"/>
    </location>
</feature>
<feature type="domain" description="Ig-like C2-type 3">
    <location>
        <begin position="303"/>
        <end position="424"/>
    </location>
</feature>
<feature type="domain" description="Ig-like C2-type 4">
    <location>
        <begin position="431"/>
        <end position="560"/>
    </location>
</feature>
<feature type="region of interest" description="Disordered" evidence="4">
    <location>
        <begin position="155"/>
        <end position="174"/>
    </location>
</feature>
<feature type="short sequence motif" description="EWI motif">
    <location>
        <begin position="274"/>
        <end position="276"/>
    </location>
</feature>
<feature type="modified residue" description="Phosphoserine" evidence="20">
    <location>
        <position position="518"/>
    </location>
</feature>
<feature type="lipid moiety-binding region" description="S-palmitoyl cysteine" evidence="1">
    <location>
        <position position="604"/>
    </location>
</feature>
<feature type="lipid moiety-binding region" description="S-palmitoyl cysteine" evidence="1">
    <location>
        <position position="605"/>
    </location>
</feature>
<feature type="glycosylation site" description="N-linked (GlcNAc...) asparagine" evidence="2">
    <location>
        <position position="50"/>
    </location>
</feature>
<feature type="glycosylation site" description="N-linked (GlcNAc...) asparagine" evidence="12">
    <location>
        <position position="327"/>
    </location>
</feature>
<feature type="glycosylation site" description="N-linked (GlcNAc...) asparagine" evidence="12">
    <location>
        <position position="463"/>
    </location>
</feature>
<feature type="disulfide bond" evidence="3">
    <location>
        <begin position="49"/>
        <end position="127"/>
    </location>
</feature>
<feature type="disulfide bond" evidence="3">
    <location>
        <begin position="186"/>
        <end position="270"/>
    </location>
</feature>
<feature type="disulfide bond" evidence="3">
    <location>
        <begin position="326"/>
        <end position="406"/>
    </location>
</feature>
<feature type="disulfide bond" evidence="3">
    <location>
        <begin position="462"/>
        <end position="544"/>
    </location>
</feature>
<feature type="splice variant" id="VSP_017429" description="In isoform 2." evidence="17">
    <location>
        <begin position="1"/>
        <end position="241"/>
    </location>
</feature>
<feature type="splice variant" id="VSP_017430" description="In isoform 2." evidence="17">
    <original>ELRLGKEGTDRYRMVVGGAQAGDAGTYHCTAAEWIQDPDGSWAQIAEKRAVLAHVDVQTLSSQLAVTVGPGERR</original>
    <variation>MRGRSWHWAAWRGQAHRSTHTWQCPLGDLCPRHQLGGQLCRKWWESGQTWPWRLELPMLSDWLQGSFVWARKGP</variation>
    <location>
        <begin position="242"/>
        <end position="315"/>
    </location>
</feature>
<feature type="splice variant" id="VSP_017431" description="In isoform 3." evidence="18">
    <location>
        <begin position="475"/>
        <end position="561"/>
    </location>
</feature>
<feature type="sequence conflict" description="In Ref. 4; AAM94901." evidence="19" ref="4">
    <original>S</original>
    <variation>R</variation>
    <location>
        <position position="303"/>
    </location>
</feature>
<feature type="sequence conflict" description="In Ref. 4; AAM94901." evidence="19" ref="4">
    <original>A</original>
    <variation>P</variation>
    <location>
        <position position="306"/>
    </location>
</feature>
<keyword id="KW-0025">Alternative splicing</keyword>
<keyword id="KW-1003">Cell membrane</keyword>
<keyword id="KW-0903">Direct protein sequencing</keyword>
<keyword id="KW-1015">Disulfide bond</keyword>
<keyword id="KW-0325">Glycoprotein</keyword>
<keyword id="KW-0393">Immunoglobulin domain</keyword>
<keyword id="KW-0449">Lipoprotein</keyword>
<keyword id="KW-0472">Membrane</keyword>
<keyword id="KW-0564">Palmitate</keyword>
<keyword id="KW-0597">Phosphoprotein</keyword>
<keyword id="KW-1267">Proteomics identification</keyword>
<keyword id="KW-0675">Receptor</keyword>
<keyword id="KW-1185">Reference proteome</keyword>
<keyword id="KW-0677">Repeat</keyword>
<keyword id="KW-0732">Signal</keyword>
<keyword id="KW-0812">Transmembrane</keyword>
<keyword id="KW-1133">Transmembrane helix</keyword>
<dbReference type="EMBL" id="AF407274">
    <property type="protein sequence ID" value="AAL01052.1"/>
    <property type="molecule type" value="mRNA"/>
</dbReference>
<dbReference type="EMBL" id="AY044845">
    <property type="protein sequence ID" value="AAK92220.1"/>
    <property type="molecule type" value="mRNA"/>
</dbReference>
<dbReference type="EMBL" id="AY157579">
    <property type="protein sequence ID" value="AAO13163.1"/>
    <property type="molecule type" value="mRNA"/>
</dbReference>
<dbReference type="EMBL" id="AF311906">
    <property type="protein sequence ID" value="AAM94901.1"/>
    <property type="molecule type" value="mRNA"/>
</dbReference>
<dbReference type="EMBL" id="AK055843">
    <property type="protein sequence ID" value="BAB71027.1"/>
    <property type="molecule type" value="mRNA"/>
</dbReference>
<dbReference type="EMBL" id="BC004108">
    <property type="protein sequence ID" value="AAH04108.2"/>
    <property type="molecule type" value="mRNA"/>
</dbReference>
<dbReference type="EMBL" id="BC053881">
    <property type="protein sequence ID" value="AAH53881.1"/>
    <property type="molecule type" value="mRNA"/>
</dbReference>
<dbReference type="CCDS" id="CCDS1195.1">
    <molecule id="Q969P0-1"/>
</dbReference>
<dbReference type="RefSeq" id="NP_001193594.1">
    <molecule id="Q969P0-1"/>
    <property type="nucleotide sequence ID" value="NM_001206665.2"/>
</dbReference>
<dbReference type="RefSeq" id="NP_001307176.1">
    <molecule id="Q969P0-1"/>
    <property type="nucleotide sequence ID" value="NM_001320247.2"/>
</dbReference>
<dbReference type="RefSeq" id="NP_443100.1">
    <molecule id="Q969P0-1"/>
    <property type="nucleotide sequence ID" value="NM_052868.6"/>
</dbReference>
<dbReference type="RefSeq" id="XP_016858324.1">
    <molecule id="Q969P0-1"/>
    <property type="nucleotide sequence ID" value="XM_017002835.2"/>
</dbReference>
<dbReference type="RefSeq" id="XP_016858325.1">
    <molecule id="Q969P0-1"/>
    <property type="nucleotide sequence ID" value="XM_017002836.2"/>
</dbReference>
<dbReference type="RefSeq" id="XP_016858326.1">
    <molecule id="Q969P0-1"/>
    <property type="nucleotide sequence ID" value="XM_017002837.2"/>
</dbReference>
<dbReference type="RefSeq" id="XP_054195621.1">
    <molecule id="Q969P0-1"/>
    <property type="nucleotide sequence ID" value="XM_054339646.1"/>
</dbReference>
<dbReference type="RefSeq" id="XP_054195622.1">
    <molecule id="Q969P0-1"/>
    <property type="nucleotide sequence ID" value="XM_054339647.1"/>
</dbReference>
<dbReference type="RefSeq" id="XP_054195623.1">
    <molecule id="Q969P0-1"/>
    <property type="nucleotide sequence ID" value="XM_054339648.1"/>
</dbReference>
<dbReference type="BioGRID" id="125011">
    <property type="interactions" value="235"/>
</dbReference>
<dbReference type="FunCoup" id="Q969P0">
    <property type="interactions" value="643"/>
</dbReference>
<dbReference type="IntAct" id="Q969P0">
    <property type="interactions" value="54"/>
</dbReference>
<dbReference type="MINT" id="Q969P0"/>
<dbReference type="STRING" id="9606.ENSP00000357065"/>
<dbReference type="GlyConnect" id="1394">
    <property type="glycosylation" value="22 N-Linked glycans (2 sites)"/>
</dbReference>
<dbReference type="GlyCosmos" id="Q969P0">
    <property type="glycosylation" value="3 sites, 23 glycans"/>
</dbReference>
<dbReference type="GlyGen" id="Q969P0">
    <property type="glycosylation" value="5 sites, 35 N-linked glycans (3 sites), 1 O-linked glycan (1 site)"/>
</dbReference>
<dbReference type="iPTMnet" id="Q969P0"/>
<dbReference type="PhosphoSitePlus" id="Q969P0"/>
<dbReference type="SwissPalm" id="Q969P0"/>
<dbReference type="BioMuta" id="IGSF8"/>
<dbReference type="DMDM" id="74762642"/>
<dbReference type="jPOST" id="Q969P0"/>
<dbReference type="MassIVE" id="Q969P0"/>
<dbReference type="PaxDb" id="9606-ENSP00000357065"/>
<dbReference type="PeptideAtlas" id="Q969P0"/>
<dbReference type="ProteomicsDB" id="75806">
    <molecule id="Q969P0-1"/>
</dbReference>
<dbReference type="ProteomicsDB" id="75807">
    <molecule id="Q969P0-2"/>
</dbReference>
<dbReference type="ProteomicsDB" id="75808">
    <molecule id="Q969P0-3"/>
</dbReference>
<dbReference type="Pumba" id="Q969P0"/>
<dbReference type="Antibodypedia" id="2186">
    <property type="antibodies" value="265 antibodies from 30 providers"/>
</dbReference>
<dbReference type="DNASU" id="93185"/>
<dbReference type="Ensembl" id="ENST00000314485.12">
    <molecule id="Q969P0-1"/>
    <property type="protein sequence ID" value="ENSP00000316664.7"/>
    <property type="gene ID" value="ENSG00000162729.14"/>
</dbReference>
<dbReference type="Ensembl" id="ENST00000368086.5">
    <molecule id="Q969P0-1"/>
    <property type="protein sequence ID" value="ENSP00000357065.1"/>
    <property type="gene ID" value="ENSG00000162729.14"/>
</dbReference>
<dbReference type="Ensembl" id="ENST00000614243.4">
    <molecule id="Q969P0-1"/>
    <property type="protein sequence ID" value="ENSP00000477565.1"/>
    <property type="gene ID" value="ENSG00000162729.14"/>
</dbReference>
<dbReference type="GeneID" id="93185"/>
<dbReference type="KEGG" id="hsa:93185"/>
<dbReference type="MANE-Select" id="ENST00000314485.12">
    <property type="protein sequence ID" value="ENSP00000316664.7"/>
    <property type="RefSeq nucleotide sequence ID" value="NM_052868.6"/>
    <property type="RefSeq protein sequence ID" value="NP_443100.1"/>
</dbReference>
<dbReference type="UCSC" id="uc001fuz.4">
    <molecule id="Q969P0-1"/>
    <property type="organism name" value="human"/>
</dbReference>
<dbReference type="AGR" id="HGNC:17813"/>
<dbReference type="CTD" id="93185"/>
<dbReference type="DisGeNET" id="93185"/>
<dbReference type="GeneCards" id="IGSF8"/>
<dbReference type="HGNC" id="HGNC:17813">
    <property type="gene designation" value="IGSF8"/>
</dbReference>
<dbReference type="HPA" id="ENSG00000162729">
    <property type="expression patterns" value="Tissue enhanced (brain)"/>
</dbReference>
<dbReference type="MIM" id="606644">
    <property type="type" value="gene"/>
</dbReference>
<dbReference type="neXtProt" id="NX_Q969P0"/>
<dbReference type="OpenTargets" id="ENSG00000162729"/>
<dbReference type="PharmGKB" id="PA29767"/>
<dbReference type="VEuPathDB" id="HostDB:ENSG00000162729"/>
<dbReference type="eggNOG" id="ENOG502QTUT">
    <property type="taxonomic scope" value="Eukaryota"/>
</dbReference>
<dbReference type="GeneTree" id="ENSGT00940000161314"/>
<dbReference type="HOGENOM" id="CLU_005187_2_0_1"/>
<dbReference type="InParanoid" id="Q969P0"/>
<dbReference type="OMA" id="FIPCNVS"/>
<dbReference type="OrthoDB" id="9949420at2759"/>
<dbReference type="PAN-GO" id="Q969P0">
    <property type="GO annotations" value="1 GO annotation based on evolutionary models"/>
</dbReference>
<dbReference type="PhylomeDB" id="Q969P0"/>
<dbReference type="TreeFam" id="TF332702"/>
<dbReference type="PathwayCommons" id="Q969P0"/>
<dbReference type="SignaLink" id="Q969P0"/>
<dbReference type="BioGRID-ORCS" id="93185">
    <property type="hits" value="9 hits in 1157 CRISPR screens"/>
</dbReference>
<dbReference type="CD-CODE" id="FB4E32DD">
    <property type="entry name" value="Presynaptic clusters and postsynaptic densities"/>
</dbReference>
<dbReference type="ChiTaRS" id="IGSF8">
    <property type="organism name" value="human"/>
</dbReference>
<dbReference type="GeneWiki" id="IGSF8"/>
<dbReference type="GenomeRNAi" id="93185"/>
<dbReference type="Pharos" id="Q969P0">
    <property type="development level" value="Tbio"/>
</dbReference>
<dbReference type="PRO" id="PR:Q969P0"/>
<dbReference type="Proteomes" id="UP000005640">
    <property type="component" value="Chromosome 1"/>
</dbReference>
<dbReference type="RNAct" id="Q969P0">
    <property type="molecule type" value="protein"/>
</dbReference>
<dbReference type="Bgee" id="ENSG00000162729">
    <property type="expression patterns" value="Expressed in right hemisphere of cerebellum and 146 other cell types or tissues"/>
</dbReference>
<dbReference type="ExpressionAtlas" id="Q969P0">
    <property type="expression patterns" value="baseline and differential"/>
</dbReference>
<dbReference type="GO" id="GO:0070062">
    <property type="term" value="C:extracellular exosome"/>
    <property type="evidence" value="ECO:0007005"/>
    <property type="project" value="UniProtKB"/>
</dbReference>
<dbReference type="GO" id="GO:0098686">
    <property type="term" value="C:hippocampal mossy fiber to CA3 synapse"/>
    <property type="evidence" value="ECO:0007669"/>
    <property type="project" value="Ensembl"/>
</dbReference>
<dbReference type="GO" id="GO:0043231">
    <property type="term" value="C:intracellular membrane-bounded organelle"/>
    <property type="evidence" value="ECO:0000314"/>
    <property type="project" value="HPA"/>
</dbReference>
<dbReference type="GO" id="GO:0016020">
    <property type="term" value="C:membrane"/>
    <property type="evidence" value="ECO:0000314"/>
    <property type="project" value="UniProtKB"/>
</dbReference>
<dbReference type="GO" id="GO:0005886">
    <property type="term" value="C:plasma membrane"/>
    <property type="evidence" value="ECO:0000305"/>
    <property type="project" value="UniProt"/>
</dbReference>
<dbReference type="GO" id="GO:0042734">
    <property type="term" value="C:presynaptic membrane"/>
    <property type="evidence" value="ECO:0007669"/>
    <property type="project" value="Ensembl"/>
</dbReference>
<dbReference type="GO" id="GO:0038023">
    <property type="term" value="F:signaling receptor activity"/>
    <property type="evidence" value="ECO:0000314"/>
    <property type="project" value="UniProt"/>
</dbReference>
<dbReference type="GO" id="GO:0048870">
    <property type="term" value="P:cell motility"/>
    <property type="evidence" value="ECO:0000303"/>
    <property type="project" value="UniProtKB"/>
</dbReference>
<dbReference type="GO" id="GO:0007399">
    <property type="term" value="P:nervous system development"/>
    <property type="evidence" value="ECO:0000303"/>
    <property type="project" value="UniProtKB"/>
</dbReference>
<dbReference type="GO" id="GO:0030335">
    <property type="term" value="P:positive regulation of cell migration"/>
    <property type="evidence" value="ECO:0000314"/>
    <property type="project" value="UniProt"/>
</dbReference>
<dbReference type="GO" id="GO:0007338">
    <property type="term" value="P:single fertilization"/>
    <property type="evidence" value="ECO:0000303"/>
    <property type="project" value="UniProtKB"/>
</dbReference>
<dbReference type="GO" id="GO:0007519">
    <property type="term" value="P:skeletal muscle tissue development"/>
    <property type="evidence" value="ECO:0000303"/>
    <property type="project" value="UniProtKB"/>
</dbReference>
<dbReference type="FunFam" id="2.60.40.10:FF:000191">
    <property type="entry name" value="Immunoglobulin superfamily member 3"/>
    <property type="match status" value="1"/>
</dbReference>
<dbReference type="FunFam" id="2.60.40.10:FF:000863">
    <property type="entry name" value="immunoglobulin superfamily member 8"/>
    <property type="match status" value="1"/>
</dbReference>
<dbReference type="Gene3D" id="2.60.40.10">
    <property type="entry name" value="Immunoglobulins"/>
    <property type="match status" value="2"/>
</dbReference>
<dbReference type="InterPro" id="IPR007110">
    <property type="entry name" value="Ig-like_dom"/>
</dbReference>
<dbReference type="InterPro" id="IPR036179">
    <property type="entry name" value="Ig-like_dom_sf"/>
</dbReference>
<dbReference type="InterPro" id="IPR013783">
    <property type="entry name" value="Ig-like_fold"/>
</dbReference>
<dbReference type="InterPro" id="IPR003599">
    <property type="entry name" value="Ig_sub"/>
</dbReference>
<dbReference type="InterPro" id="IPR013106">
    <property type="entry name" value="Ig_V-set"/>
</dbReference>
<dbReference type="InterPro" id="IPR051102">
    <property type="entry name" value="IgSF_V-set/TM_domain"/>
</dbReference>
<dbReference type="PANTHER" id="PTHR12207:SF22">
    <property type="entry name" value="IMMUNOGLOBULIN SUPERFAMILY MEMBER 8"/>
    <property type="match status" value="1"/>
</dbReference>
<dbReference type="PANTHER" id="PTHR12207">
    <property type="entry name" value="V-SET AND TRANSMEMBRANE DOMAIN-CONTAINING PROTEIN"/>
    <property type="match status" value="1"/>
</dbReference>
<dbReference type="Pfam" id="PF07686">
    <property type="entry name" value="V-set"/>
    <property type="match status" value="1"/>
</dbReference>
<dbReference type="SMART" id="SM00409">
    <property type="entry name" value="IG"/>
    <property type="match status" value="4"/>
</dbReference>
<dbReference type="SUPFAM" id="SSF48726">
    <property type="entry name" value="Immunoglobulin"/>
    <property type="match status" value="4"/>
</dbReference>
<dbReference type="PROSITE" id="PS50835">
    <property type="entry name" value="IG_LIKE"/>
    <property type="match status" value="2"/>
</dbReference>
<evidence type="ECO:0000250" key="1"/>
<evidence type="ECO:0000255" key="2"/>
<evidence type="ECO:0000255" key="3">
    <source>
        <dbReference type="PROSITE-ProRule" id="PRU00114"/>
    </source>
</evidence>
<evidence type="ECO:0000256" key="4">
    <source>
        <dbReference type="SAM" id="MobiDB-lite"/>
    </source>
</evidence>
<evidence type="ECO:0000269" key="5">
    <source>
    </source>
</evidence>
<evidence type="ECO:0000269" key="6">
    <source>
    </source>
</evidence>
<evidence type="ECO:0000269" key="7">
    <source>
    </source>
</evidence>
<evidence type="ECO:0000269" key="8">
    <source>
    </source>
</evidence>
<evidence type="ECO:0000269" key="9">
    <source>
    </source>
</evidence>
<evidence type="ECO:0000269" key="10">
    <source>
    </source>
</evidence>
<evidence type="ECO:0000269" key="11">
    <source>
    </source>
</evidence>
<evidence type="ECO:0000269" key="12">
    <source>
    </source>
</evidence>
<evidence type="ECO:0000269" key="13">
    <source>
    </source>
</evidence>
<evidence type="ECO:0000269" key="14">
    <source>
    </source>
</evidence>
<evidence type="ECO:0000269" key="15">
    <source>
    </source>
</evidence>
<evidence type="ECO:0000269" key="16">
    <source>
    </source>
</evidence>
<evidence type="ECO:0000303" key="17">
    <source>
    </source>
</evidence>
<evidence type="ECO:0000303" key="18">
    <source ref="4"/>
</evidence>
<evidence type="ECO:0000305" key="19"/>
<evidence type="ECO:0007744" key="20">
    <source>
    </source>
</evidence>
<accession>Q969P0</accession>
<accession>Q8NG09</accession>
<accession>Q96DP4</accession>
<accession>Q9BTG9</accession>
<reference key="1">
    <citation type="journal article" date="2001" name="J. Biol. Chem.">
        <title>EWI-2 is a major CD9 and CD81 partner and member of a novel Ig protein subfamily.</title>
        <authorList>
            <person name="Stipp C.S."/>
            <person name="Kolesnikova T.V."/>
            <person name="Hemler M.E."/>
        </authorList>
    </citation>
    <scope>NUCLEOTIDE SEQUENCE [MRNA] (ISOFORM 1)</scope>
    <scope>FUNCTION</scope>
    <scope>TISSUE SPECIFICITY</scope>
    <scope>IDENTIFICATION BY MASS SPECTROMETRY</scope>
    <scope>INTERACTION WITH CD81 AND CD9</scope>
</reference>
<reference key="2">
    <citation type="journal article" date="2003" name="Biochem. J.">
        <title>EWI-2 is a new component of the tetraspanin web in hepatocytes and lymphoid cells.</title>
        <authorList>
            <person name="Charrin S."/>
            <person name="Le Naour F."/>
            <person name="Labas V."/>
            <person name="Billard M."/>
            <person name="Le Caer J.-P."/>
            <person name="Emile J.-F."/>
            <person name="Petit M.-A."/>
            <person name="Boucheix C."/>
            <person name="Rubinstein E."/>
        </authorList>
    </citation>
    <scope>NUCLEOTIDE SEQUENCE [MRNA] (ISOFORM 1)</scope>
    <scope>IDENTIFICATION BY MASS SPECTROMETRY</scope>
    <scope>TISSUE SPECIFICITY</scope>
</reference>
<reference key="3">
    <citation type="journal article" date="2003" name="Br. J. Dermatol.">
        <title>Identification of novel genes for secreted and membrane-anchored proteins in human keratinocytes.</title>
        <authorList>
            <person name="Bonkobara M."/>
            <person name="Das A."/>
            <person name="Takao J."/>
            <person name="Cruz P.D. Jr."/>
            <person name="Ariizumi K."/>
        </authorList>
    </citation>
    <scope>NUCLEOTIDE SEQUENCE [MRNA] (ISOFORM 1)</scope>
    <scope>FUNCTION</scope>
</reference>
<reference key="4">
    <citation type="submission" date="2000-10" db="EMBL/GenBank/DDBJ databases">
        <title>Identification of novel membrane proteins.</title>
        <authorList>
            <person name="Zhang W."/>
            <person name="Li N."/>
            <person name="Wan T."/>
            <person name="Cao X."/>
        </authorList>
    </citation>
    <scope>NUCLEOTIDE SEQUENCE [MRNA] (ISOFORM 3)</scope>
</reference>
<reference key="5">
    <citation type="journal article" date="2004" name="Nat. Genet.">
        <title>Complete sequencing and characterization of 21,243 full-length human cDNAs.</title>
        <authorList>
            <person name="Ota T."/>
            <person name="Suzuki Y."/>
            <person name="Nishikawa T."/>
            <person name="Otsuki T."/>
            <person name="Sugiyama T."/>
            <person name="Irie R."/>
            <person name="Wakamatsu A."/>
            <person name="Hayashi K."/>
            <person name="Sato H."/>
            <person name="Nagai K."/>
            <person name="Kimura K."/>
            <person name="Makita H."/>
            <person name="Sekine M."/>
            <person name="Obayashi M."/>
            <person name="Nishi T."/>
            <person name="Shibahara T."/>
            <person name="Tanaka T."/>
            <person name="Ishii S."/>
            <person name="Yamamoto J."/>
            <person name="Saito K."/>
            <person name="Kawai Y."/>
            <person name="Isono Y."/>
            <person name="Nakamura Y."/>
            <person name="Nagahari K."/>
            <person name="Murakami K."/>
            <person name="Yasuda T."/>
            <person name="Iwayanagi T."/>
            <person name="Wagatsuma M."/>
            <person name="Shiratori A."/>
            <person name="Sudo H."/>
            <person name="Hosoiri T."/>
            <person name="Kaku Y."/>
            <person name="Kodaira H."/>
            <person name="Kondo H."/>
            <person name="Sugawara M."/>
            <person name="Takahashi M."/>
            <person name="Kanda K."/>
            <person name="Yokoi T."/>
            <person name="Furuya T."/>
            <person name="Kikkawa E."/>
            <person name="Omura Y."/>
            <person name="Abe K."/>
            <person name="Kamihara K."/>
            <person name="Katsuta N."/>
            <person name="Sato K."/>
            <person name="Tanikawa M."/>
            <person name="Yamazaki M."/>
            <person name="Ninomiya K."/>
            <person name="Ishibashi T."/>
            <person name="Yamashita H."/>
            <person name="Murakawa K."/>
            <person name="Fujimori K."/>
            <person name="Tanai H."/>
            <person name="Kimata M."/>
            <person name="Watanabe M."/>
            <person name="Hiraoka S."/>
            <person name="Chiba Y."/>
            <person name="Ishida S."/>
            <person name="Ono Y."/>
            <person name="Takiguchi S."/>
            <person name="Watanabe S."/>
            <person name="Yosida M."/>
            <person name="Hotuta T."/>
            <person name="Kusano J."/>
            <person name="Kanehori K."/>
            <person name="Takahashi-Fujii A."/>
            <person name="Hara H."/>
            <person name="Tanase T.-O."/>
            <person name="Nomura Y."/>
            <person name="Togiya S."/>
            <person name="Komai F."/>
            <person name="Hara R."/>
            <person name="Takeuchi K."/>
            <person name="Arita M."/>
            <person name="Imose N."/>
            <person name="Musashino K."/>
            <person name="Yuuki H."/>
            <person name="Oshima A."/>
            <person name="Sasaki N."/>
            <person name="Aotsuka S."/>
            <person name="Yoshikawa Y."/>
            <person name="Matsunawa H."/>
            <person name="Ichihara T."/>
            <person name="Shiohata N."/>
            <person name="Sano S."/>
            <person name="Moriya S."/>
            <person name="Momiyama H."/>
            <person name="Satoh N."/>
            <person name="Takami S."/>
            <person name="Terashima Y."/>
            <person name="Suzuki O."/>
            <person name="Nakagawa S."/>
            <person name="Senoh A."/>
            <person name="Mizoguchi H."/>
            <person name="Goto Y."/>
            <person name="Shimizu F."/>
            <person name="Wakebe H."/>
            <person name="Hishigaki H."/>
            <person name="Watanabe T."/>
            <person name="Sugiyama A."/>
            <person name="Takemoto M."/>
            <person name="Kawakami B."/>
            <person name="Yamazaki M."/>
            <person name="Watanabe K."/>
            <person name="Kumagai A."/>
            <person name="Itakura S."/>
            <person name="Fukuzumi Y."/>
            <person name="Fujimori Y."/>
            <person name="Komiyama M."/>
            <person name="Tashiro H."/>
            <person name="Tanigami A."/>
            <person name="Fujiwara T."/>
            <person name="Ono T."/>
            <person name="Yamada K."/>
            <person name="Fujii Y."/>
            <person name="Ozaki K."/>
            <person name="Hirao M."/>
            <person name="Ohmori Y."/>
            <person name="Kawabata A."/>
            <person name="Hikiji T."/>
            <person name="Kobatake N."/>
            <person name="Inagaki H."/>
            <person name="Ikema Y."/>
            <person name="Okamoto S."/>
            <person name="Okitani R."/>
            <person name="Kawakami T."/>
            <person name="Noguchi S."/>
            <person name="Itoh T."/>
            <person name="Shigeta K."/>
            <person name="Senba T."/>
            <person name="Matsumura K."/>
            <person name="Nakajima Y."/>
            <person name="Mizuno T."/>
            <person name="Morinaga M."/>
            <person name="Sasaki M."/>
            <person name="Togashi T."/>
            <person name="Oyama M."/>
            <person name="Hata H."/>
            <person name="Watanabe M."/>
            <person name="Komatsu T."/>
            <person name="Mizushima-Sugano J."/>
            <person name="Satoh T."/>
            <person name="Shirai Y."/>
            <person name="Takahashi Y."/>
            <person name="Nakagawa K."/>
            <person name="Okumura K."/>
            <person name="Nagase T."/>
            <person name="Nomura N."/>
            <person name="Kikuchi H."/>
            <person name="Masuho Y."/>
            <person name="Yamashita R."/>
            <person name="Nakai K."/>
            <person name="Yada T."/>
            <person name="Nakamura Y."/>
            <person name="Ohara O."/>
            <person name="Isogai T."/>
            <person name="Sugano S."/>
        </authorList>
    </citation>
    <scope>NUCLEOTIDE SEQUENCE [LARGE SCALE MRNA] (ISOFORM 2)</scope>
    <source>
        <tissue>Kidney</tissue>
    </source>
</reference>
<reference key="6">
    <citation type="journal article" date="2004" name="Genome Res.">
        <title>The status, quality, and expansion of the NIH full-length cDNA project: the Mammalian Gene Collection (MGC).</title>
        <authorList>
            <consortium name="The MGC Project Team"/>
        </authorList>
    </citation>
    <scope>NUCLEOTIDE SEQUENCE [LARGE SCALE MRNA] (ISOFORM 1)</scope>
    <source>
        <tissue>Lymph</tissue>
    </source>
</reference>
<reference key="7">
    <citation type="journal article" date="2009" name="Proc. Natl. Acad. Sci. U.S.A.">
        <title>Global profiling of protease cleavage sites by chemoselective labeling of protein N-termini.</title>
        <authorList>
            <person name="Xu G."/>
            <person name="Shin S.B."/>
            <person name="Jaffrey S.R."/>
        </authorList>
    </citation>
    <scope>PROTEIN SEQUENCE [LARGE SCALE ANALYSIS] OF 28-40</scope>
    <source>
        <tissue>Leukemic T-cell</tissue>
    </source>
</reference>
<reference key="8">
    <citation type="journal article" date="2003" name="Cancer Res.">
        <title>EWI2/PGRL associates with the metastasis suppressor KAI1/CD82 and inhibits the migration of prostate cancer cells.</title>
        <authorList>
            <person name="Zhang X.A."/>
            <person name="Lane W.S."/>
            <person name="Charrin S."/>
            <person name="Rubinstein E."/>
            <person name="Liu L."/>
        </authorList>
    </citation>
    <scope>FUNCTION</scope>
    <scope>INTERACTION WITH CD82</scope>
    <scope>IDENTIFICATION BY MASS SPECTROMETRY</scope>
    <scope>TISSUE SPECIFICITY</scope>
</reference>
<reference key="9">
    <citation type="journal article" date="2003" name="J. Cell Biol.">
        <title>EWI-2 regulates alpha3beta1 integrin-dependent cell functions on laminin-5.</title>
        <authorList>
            <person name="Stipp C.S."/>
            <person name="Kolesnikova T.V."/>
            <person name="Hemler M.E."/>
        </authorList>
    </citation>
    <scope>FUNCTION</scope>
    <scope>IDENTIFICATION BY MASS SPECTROMETRY</scope>
    <scope>INTERACTION WITH INTEGRIN ALPHA-3 BETA-1</scope>
</reference>
<reference key="10">
    <citation type="journal article" date="2004" name="Blood">
        <title>EWI-2 modulates lymphocyte integrin alpha4beta1 functions.</title>
        <authorList>
            <person name="Kolesnikova T.V."/>
            <person name="Stipp C.S."/>
            <person name="Rao R.M."/>
            <person name="Lane W.S."/>
            <person name="Luscinskas F.W."/>
            <person name="Hemler M.E."/>
        </authorList>
    </citation>
    <scope>FUNCTION</scope>
    <scope>IDENTIFICATION BY MASS SPECTROMETRY</scope>
    <scope>INTERACTION WITH INTEGRIN ALPHA-4 BETA-1</scope>
</reference>
<reference key="11">
    <citation type="journal article" date="2007" name="Mol. Cell. Biol.">
        <title>EWI-2/CD316 is an inducible receptor of HSPA8 on human dendritic cells.</title>
        <authorList>
            <person name="Kettner S."/>
            <person name="Kalthoff F."/>
            <person name="Graf P."/>
            <person name="Priller E."/>
            <person name="Kricek F."/>
            <person name="Lindley I."/>
            <person name="Schweighoffer T."/>
        </authorList>
    </citation>
    <scope>FUNCTION</scope>
    <scope>INTERACTION WITH HSPA8</scope>
    <scope>TISSUE SPECIFICITY</scope>
</reference>
<reference key="12">
    <citation type="journal article" date="2009" name="J. Proteome Res.">
        <title>Glycoproteomics analysis of human liver tissue by combination of multiple enzyme digestion and hydrazide chemistry.</title>
        <authorList>
            <person name="Chen R."/>
            <person name="Jiang X."/>
            <person name="Sun D."/>
            <person name="Han G."/>
            <person name="Wang F."/>
            <person name="Ye M."/>
            <person name="Wang L."/>
            <person name="Zou H."/>
        </authorList>
    </citation>
    <scope>GLYCOSYLATION [LARGE SCALE ANALYSIS] AT ASN-327 AND ASN-463</scope>
    <source>
        <tissue>Liver</tissue>
    </source>
</reference>
<reference key="13">
    <citation type="journal article" date="2012" name="J. Immunol.">
        <title>EWI-2 association with alpha-actinin regulates T cell immune synapses and HIV viral infection.</title>
        <authorList>
            <person name="Gordon-Alonso M."/>
            <person name="Sala-Valdes M."/>
            <person name="Rocha-Perugini V."/>
            <person name="Perez-Hernandez D."/>
            <person name="Lopez-Martin S."/>
            <person name="Ursa A."/>
            <person name="Alvarez S."/>
            <person name="Kolesnikova T.V."/>
            <person name="Vazquez J."/>
            <person name="Sanchez-Madrid F."/>
            <person name="Yanez-Mo M."/>
        </authorList>
    </citation>
    <scope>FUNCTION</scope>
    <scope>SUBCELLULAR LOCATION</scope>
    <scope>INTERACTION WITH ACTN1 AND ACTN4</scope>
</reference>
<reference key="14">
    <citation type="journal article" date="2013" name="Cell. Microbiol.">
        <title>EWI-2wint promotes CD81 clustering that abrogates Hepatitis C Virus entry.</title>
        <authorList>
            <person name="Potel J."/>
            <person name="Rassam P."/>
            <person name="Montpellier C."/>
            <person name="Kaestner L."/>
            <person name="Werkmeister E."/>
            <person name="Tews B.A."/>
            <person name="Couturier C."/>
            <person name="Popescu C.I."/>
            <person name="Baumert T.F."/>
            <person name="Rubinstein E."/>
            <person name="Dubuisson J."/>
            <person name="Milhiet P.E."/>
            <person name="Cocquerel L."/>
        </authorList>
    </citation>
    <scope>FUNCTION</scope>
    <scope>INTERACTION WITH CD81</scope>
    <scope>SUBCELLULAR LOCATION</scope>
</reference>
<reference key="15">
    <citation type="journal article" date="2014" name="J. Proteomics">
        <title>An enzyme assisted RP-RPLC approach for in-depth analysis of human liver phosphoproteome.</title>
        <authorList>
            <person name="Bian Y."/>
            <person name="Song C."/>
            <person name="Cheng K."/>
            <person name="Dong M."/>
            <person name="Wang F."/>
            <person name="Huang J."/>
            <person name="Sun D."/>
            <person name="Wang L."/>
            <person name="Ye M."/>
            <person name="Zou H."/>
        </authorList>
    </citation>
    <scope>PHOSPHORYLATION [LARGE SCALE ANALYSIS] AT SER-518</scope>
    <scope>IDENTIFICATION BY MASS SPECTROMETRY [LARGE SCALE ANALYSIS]</scope>
    <source>
        <tissue>Liver</tissue>
    </source>
</reference>
<reference key="16">
    <citation type="journal article" date="2019" name="Viruses">
        <title>EWI-2 Inhibits Cell-Cell Fusion at the HIV-1 Virological Presynapse.</title>
        <authorList>
            <person name="Whitaker E.E."/>
            <person name="Matheson N.J."/>
            <person name="Perlee S."/>
            <person name="Munson P.B."/>
            <person name="Symeonides M."/>
            <person name="Thali M."/>
        </authorList>
    </citation>
    <scope>FUNCTION</scope>
    <scope>SUBCELLULAR LOCATION</scope>
</reference>
<reference key="17">
    <citation type="journal article" date="2024" name="Cell">
        <title>IGSF8 is an innate immune checkpoint and cancer immunotherapy target.</title>
        <authorList>
            <person name="Li Y."/>
            <person name="Wu X."/>
            <person name="Sheng C."/>
            <person name="Liu H."/>
            <person name="Liu H."/>
            <person name="Tang Y."/>
            <person name="Liu C."/>
            <person name="Ding Q."/>
            <person name="Xie B."/>
            <person name="Xiao X."/>
            <person name="Zheng R."/>
            <person name="Yu Q."/>
            <person name="Guo Z."/>
            <person name="Ma J."/>
            <person name="Wang J."/>
            <person name="Gao J."/>
            <person name="Tian M."/>
            <person name="Wang W."/>
            <person name="Zhou J."/>
            <person name="Jiang L."/>
            <person name="Gu M."/>
            <person name="Shi S."/>
            <person name="Paull M."/>
            <person name="Yang G."/>
            <person name="Yang W."/>
            <person name="Landau S."/>
            <person name="Bao X."/>
            <person name="Hu X."/>
            <person name="Liu X.S."/>
            <person name="Xiao T."/>
        </authorList>
    </citation>
    <scope>FUNCTION</scope>
    <scope>INTERACTION WITH KIR3DL2</scope>
</reference>
<sequence>MGALRPTLLPPSLPLLLLLMLGMGCWAREVLVPEGPLYRVAGTAVSISCNVTGYEGPAQQNFEWFLYRPEAPDTALGIVSTKDTQFSYAVFKSRVVAGEVQVQRLQGDAVVLKIARLQAQDAGIYECHTPSTDTRYLGSYSGKVELRVLPDVLQVSAAPPGPRGRQAPTSPPRMTVHEGQELALGCLARTSTQKHTHLAVSFGRSVPEAPVGRSTLQEVVGIRSDLAVEAGAPYAERLAAGELRLGKEGTDRYRMVVGGAQAGDAGTYHCTAAEWIQDPDGSWAQIAEKRAVLAHVDVQTLSSQLAVTVGPGERRIGPGEPLELLCNVSGALPPAGRHAAYSVGWEMAPAGAPGPGRLVAQLDTEGVGSLGPGYEGRHIAMEKVASRTYRLRLEAARPGDAGTYRCLAKAYVRGSGTRLREAASARSRPLPVHVREEGVVLEAVAWLAGGTVYRGETASLLCNISVRGGPPGLRLAASWWVERPEDGELSSVPAQLVGGVGQDGVAELGVRPGGGPVSVELVGPRSHRLRLHSLGPEDEGVYHCAPSAWVQHADYSWYQAGSARSGPVTVYPYMHALDTLFVPLLVGTGVALVTGATVLGTITCCFMKRLRKR</sequence>